<keyword id="KW-0489">Methyltransferase</keyword>
<keyword id="KW-1185">Reference proteome</keyword>
<keyword id="KW-0949">S-adenosyl-L-methionine</keyword>
<keyword id="KW-0808">Transferase</keyword>
<keyword id="KW-0843">Virulence</keyword>
<comment type="function">
    <text evidence="1 2 3 4 5 6 7 8 9 10 11">N-methyltransferase; part of the gene cluster that mediates the biosynthesis of gliotoxin, a member of the epipolythiodioxopiperazine (ETP) class of toxins characterized by a disulfide bridged cyclic dipeptide (PubMed:15979823, PubMed:21612254). The first step in gliotoxin biosynthesis is the condensation of serine and phenylalanine to form the cyclo-L-phenylalanyl-L-serine diketopiperazine (DKP) by the NRPS gliP (PubMed:17154540, PubMed:21612254). GliP is also able to produce the DKP cyclo-L-tryptophanyl-L-serine, suggesting that the substrate specificity of the first adenylation (A) domain in gliP is sufficiently relaxed to accommodate both L-Phe and L-Trp (PubMed:23434416). The cytochrome P450 monooxygenase gliC has been shown to catalyze the subsequent hydroxylation of the alpha-carbon of L-Phe in cyclo-L-phenylalanyl-L-serine whereas the second cytochrome P450 enzyme, gliF, is presumably involved in the modification of the DKP side chain (PubMed:23434416, PubMed:24039048). The glutathione S-transferase (GST) gliG then forms a bis-glutathionylated biosynthetic intermediate which is responsible for the sulfurization of gliotoxin (PubMed:21513890, PubMed:21749092). This bis-glutathionylated intermediate is subsequently processed by the gamma-glutamyl cyclotransferase gliK to remove both gamma-glutamyl moieties (PubMed:22903976, PubMed:24039048). Subsequent processing via gliI yields a biosynthetic intermediate, which is N-methylated via the N-methyltransferase gliN, before the gliotoxin oxidoreductase gliT-mediated disulfide bridge closure (PubMed:20548963, PubMed:22936680, PubMed:24039048, PubMed:25062268). GliN-mediated amide methylation confers stability to ETP, damping the spontaneous formation of tri- and tetrasulfides (PubMed:25062268). Intracellular dithiol gliotoxin oxidized by gliT is subsequently effluxed by gliA (PubMed:26150413). Gliotoxin contributes to pathogenesis during invasive aspergillosis (PubMed:17601876, PubMed:18199036). In macrophages and neutrophils, gliotoxin showed inhibition of various different cell functions including cytokine production, antigen presentation, phagocytosis, and production of reactive oxygen species (PubMed:17601876).</text>
</comment>
<comment type="pathway">
    <text evidence="11">Mycotoxin biosynthesis.</text>
</comment>
<comment type="similarity">
    <text evidence="13">Belongs to the methyltransferase superfamily. LaeA methyltransferase family.</text>
</comment>
<comment type="sequence caution" evidence="13">
    <conflict type="erroneous gene model prediction">
        <sequence resource="EMBL-CDS" id="AAW03301"/>
    </conflict>
</comment>
<gene>
    <name evidence="12" type="primary">gliN</name>
    <name type="ORF">AFUA_6G09720</name>
</gene>
<sequence>MTVLPDSENGYLLNYEDQEKRRMNMQHDLIKTYMGKLILAPLPFDQPNLRVLDSGTFNGLWLEDASTLLQSPTLVGTDVSPTAFPAKRPPNTEFHVQSISDPWPTEWRDSFDLVHQKLVIACVPPDEGRQALYRLIDLAKPGTGWVQFTEGSLEHLTPEQRKQYPVLARFQSLVAEMLPHFRWNPRPGKLVRQWLEEYGLQEVQEKVMEIPIGAGNPDPKLGEMAKQNMLEVVSNFRTAATRLPDGTGIRAEDFDPILRDIKVEFETVGGILRFNTVWGRRP</sequence>
<reference key="1">
    <citation type="journal article" date="2005" name="FEMS Microbiol. Lett.">
        <title>Bioinformatic and expression analysis of the putative gliotoxin biosynthetic gene cluster of Aspergillus fumigatus.</title>
        <authorList>
            <person name="Gardiner D.M."/>
            <person name="Howlett B.J."/>
        </authorList>
    </citation>
    <scope>NUCLEOTIDE SEQUENCE [GENOMIC DNA]</scope>
    <scope>FUNCTION</scope>
    <source>
        <strain>ATCC MYA-4609 / CBS 101355 / FGSC A1100 / Af293</strain>
    </source>
</reference>
<reference key="2">
    <citation type="journal article" date="2005" name="Nature">
        <title>Genomic sequence of the pathogenic and allergenic filamentous fungus Aspergillus fumigatus.</title>
        <authorList>
            <person name="Nierman W.C."/>
            <person name="Pain A."/>
            <person name="Anderson M.J."/>
            <person name="Wortman J.R."/>
            <person name="Kim H.S."/>
            <person name="Arroyo J."/>
            <person name="Berriman M."/>
            <person name="Abe K."/>
            <person name="Archer D.B."/>
            <person name="Bermejo C."/>
            <person name="Bennett J.W."/>
            <person name="Bowyer P."/>
            <person name="Chen D."/>
            <person name="Collins M."/>
            <person name="Coulsen R."/>
            <person name="Davies R."/>
            <person name="Dyer P.S."/>
            <person name="Farman M.L."/>
            <person name="Fedorova N."/>
            <person name="Fedorova N.D."/>
            <person name="Feldblyum T.V."/>
            <person name="Fischer R."/>
            <person name="Fosker N."/>
            <person name="Fraser A."/>
            <person name="Garcia J.L."/>
            <person name="Garcia M.J."/>
            <person name="Goble A."/>
            <person name="Goldman G.H."/>
            <person name="Gomi K."/>
            <person name="Griffith-Jones S."/>
            <person name="Gwilliam R."/>
            <person name="Haas B.J."/>
            <person name="Haas H."/>
            <person name="Harris D.E."/>
            <person name="Horiuchi H."/>
            <person name="Huang J."/>
            <person name="Humphray S."/>
            <person name="Jimenez J."/>
            <person name="Keller N."/>
            <person name="Khouri H."/>
            <person name="Kitamoto K."/>
            <person name="Kobayashi T."/>
            <person name="Konzack S."/>
            <person name="Kulkarni R."/>
            <person name="Kumagai T."/>
            <person name="Lafton A."/>
            <person name="Latge J.-P."/>
            <person name="Li W."/>
            <person name="Lord A."/>
            <person name="Lu C."/>
            <person name="Majoros W.H."/>
            <person name="May G.S."/>
            <person name="Miller B.L."/>
            <person name="Mohamoud Y."/>
            <person name="Molina M."/>
            <person name="Monod M."/>
            <person name="Mouyna I."/>
            <person name="Mulligan S."/>
            <person name="Murphy L.D."/>
            <person name="O'Neil S."/>
            <person name="Paulsen I."/>
            <person name="Penalva M.A."/>
            <person name="Pertea M."/>
            <person name="Price C."/>
            <person name="Pritchard B.L."/>
            <person name="Quail M.A."/>
            <person name="Rabbinowitsch E."/>
            <person name="Rawlins N."/>
            <person name="Rajandream M.A."/>
            <person name="Reichard U."/>
            <person name="Renauld H."/>
            <person name="Robson G.D."/>
            <person name="Rodriguez de Cordoba S."/>
            <person name="Rodriguez-Pena J.M."/>
            <person name="Ronning C.M."/>
            <person name="Rutter S."/>
            <person name="Salzberg S.L."/>
            <person name="Sanchez M."/>
            <person name="Sanchez-Ferrero J.C."/>
            <person name="Saunders D."/>
            <person name="Seeger K."/>
            <person name="Squares R."/>
            <person name="Squares S."/>
            <person name="Takeuchi M."/>
            <person name="Tekaia F."/>
            <person name="Turner G."/>
            <person name="Vazquez de Aldana C.R."/>
            <person name="Weidman J."/>
            <person name="White O."/>
            <person name="Woodward J.R."/>
            <person name="Yu J.-H."/>
            <person name="Fraser C.M."/>
            <person name="Galagan J.E."/>
            <person name="Asai K."/>
            <person name="Machida M."/>
            <person name="Hall N."/>
            <person name="Barrell B.G."/>
            <person name="Denning D.W."/>
        </authorList>
    </citation>
    <scope>NUCLEOTIDE SEQUENCE [LARGE SCALE GENOMIC DNA]</scope>
    <source>
        <strain>ATCC MYA-4609 / CBS 101355 / FGSC A1100 / Af293</strain>
    </source>
</reference>
<reference key="3">
    <citation type="journal article" date="2006" name="Biochemistry">
        <title>GliP, a multimodular nonribosomal peptide synthetase in Aspergillus fumigatus, makes the diketopiperazine scaffold of gliotoxin.</title>
        <authorList>
            <person name="Balibar C.J."/>
            <person name="Walsh C.T."/>
        </authorList>
    </citation>
    <scope>FUNCTION</scope>
</reference>
<reference key="4">
    <citation type="journal article" date="2007" name="Eukaryot. Cell">
        <title>Gliotoxin is a virulence factor of Aspergillus fumigatus: gliP deletion attenuates virulence in mice immunosuppressed with hydrocortisone.</title>
        <authorList>
            <person name="Sugui J.A."/>
            <person name="Pardo J."/>
            <person name="Chang Y.C."/>
            <person name="Zarember K.A."/>
            <person name="Nardone G."/>
            <person name="Galvez E.M."/>
            <person name="Mullbacher A."/>
            <person name="Gallin J.I."/>
            <person name="Simon M.M."/>
            <person name="Kwon-Chung K.J."/>
        </authorList>
    </citation>
    <scope>FUNCTION</scope>
</reference>
<reference key="5">
    <citation type="journal article" date="2008" name="J. Infect. Dis.">
        <title>Gliotoxin production in Aspergillus fumigatus contributes to host-specific differences in virulence.</title>
        <authorList>
            <person name="Spikes S."/>
            <person name="Xu R."/>
            <person name="Nguyen C.K."/>
            <person name="Chamilos G."/>
            <person name="Kontoyiannis D.P."/>
            <person name="Jacobson R.H."/>
            <person name="Ejzykowicz D.E."/>
            <person name="Chiang L.Y."/>
            <person name="Filler S.G."/>
            <person name="May G.S."/>
        </authorList>
    </citation>
    <scope>FUNCTION</scope>
</reference>
<reference key="6">
    <citation type="journal article" date="2010" name="PLoS Pathog.">
        <title>Self-protection against gliotoxin--a component of the gliotoxin biosynthetic cluster, GliT, completely protects Aspergillus fumigatus against exogenous gliotoxin.</title>
        <authorList>
            <person name="Schrettl M."/>
            <person name="Carberry S."/>
            <person name="Kavanagh K."/>
            <person name="Haas H."/>
            <person name="Jones G.W."/>
            <person name="O'Brien J."/>
            <person name="Nolan A."/>
            <person name="Stephens J."/>
            <person name="Fenelon O."/>
            <person name="Doyle S."/>
        </authorList>
    </citation>
    <scope>FUNCTION</scope>
</reference>
<reference key="7">
    <citation type="journal article" date="2011" name="Chem. Biol.">
        <title>The role of glutathione S-transferase GliG in gliotoxin biosynthesis in Aspergillus fumigatus.</title>
        <authorList>
            <person name="Davis C."/>
            <person name="Carberry S."/>
            <person name="Schrettl M."/>
            <person name="Singh I."/>
            <person name="Stephens J.C."/>
            <person name="Barry S.M."/>
            <person name="Kavanagh K."/>
            <person name="Challis G.L."/>
            <person name="Brougham D."/>
            <person name="Doyle S."/>
        </authorList>
    </citation>
    <scope>FUNCTION</scope>
</reference>
<reference key="8">
    <citation type="journal article" date="2011" name="J. Am. Chem. Soc.">
        <title>Identification of cryptic products of the gliotoxin gene cluster using NMR-based comparative metabolomics and a model for gliotoxin biosynthesis.</title>
        <authorList>
            <person name="Forseth R.R."/>
            <person name="Fox E.M."/>
            <person name="Chung D."/>
            <person name="Howlett B.J."/>
            <person name="Keller N.P."/>
            <person name="Schroeder F.C."/>
        </authorList>
    </citation>
    <scope>FUNCTION</scope>
</reference>
<reference key="9">
    <citation type="journal article" date="2011" name="J. Am. Chem. Soc.">
        <title>A dedicated glutathione S-transferase mediates carbon-sulfur bond formation in gliotoxin biosynthesis.</title>
        <authorList>
            <person name="Scharf D.H."/>
            <person name="Remme N."/>
            <person name="Habel A."/>
            <person name="Chankhamjon P."/>
            <person name="Scherlach K."/>
            <person name="Heinekamp T."/>
            <person name="Hortschansky P."/>
            <person name="Brakhage A.A."/>
            <person name="Hertweck C."/>
        </authorList>
    </citation>
    <scope>FUNCTION</scope>
</reference>
<reference key="10">
    <citation type="journal article" date="2012" name="Angew. Chem. Int. Ed.">
        <title>Epidithiol formation by an unprecedented twin carbon-sulfur lyase in the gliotoxin pathway.</title>
        <authorList>
            <person name="Scharf D.H."/>
            <person name="Chankhamjon P."/>
            <person name="Scherlach K."/>
            <person name="Heinekamp T."/>
            <person name="Roth M."/>
            <person name="Brakhage A.A."/>
            <person name="Hertweck C."/>
        </authorList>
    </citation>
    <scope>FUNCTION</scope>
</reference>
<reference key="11">
    <citation type="journal article" date="2012" name="Eukaryot. Cell">
        <title>The Aspergillus fumigatus protein GliK protects against oxidative stress and is essential for gliotoxin biosynthesis.</title>
        <authorList>
            <person name="Gallagher L."/>
            <person name="Owens R.A."/>
            <person name="Dolan S.K."/>
            <person name="O'Keeffe G."/>
            <person name="Schrettl M."/>
            <person name="Kavanagh K."/>
            <person name="Jones G.W."/>
            <person name="Doyle S."/>
        </authorList>
    </citation>
    <scope>FUNCTION</scope>
</reference>
<reference key="12">
    <citation type="journal article" date="2013" name="Angew. Chem. Int. Ed.">
        <title>Epidithiodiketopiperazine biosynthesis: a four-enzyme cascade converts glutathione conjugates into transannular disulfide bridges.</title>
        <authorList>
            <person name="Scharf D.H."/>
            <person name="Chankhamjon P."/>
            <person name="Scherlach K."/>
            <person name="Heinekamp T."/>
            <person name="Willing K."/>
            <person name="Brakhage A.A."/>
            <person name="Hertweck C."/>
        </authorList>
    </citation>
    <scope>FUNCTION</scope>
</reference>
<reference key="13">
    <citation type="journal article" date="2013" name="Bioorg. Med. Chem. Lett.">
        <title>Reconstitution of the early steps of gliotoxin biosynthesis in Aspergillus nidulans reveals the role of the monooxygenase GliC.</title>
        <authorList>
            <person name="Chang S.L."/>
            <person name="Chiang Y.M."/>
            <person name="Yeh H.H."/>
            <person name="Wu T.K."/>
            <person name="Wang C.C."/>
        </authorList>
    </citation>
    <scope>FUNCTION</scope>
</reference>
<reference key="14">
    <citation type="journal article" date="2014" name="J. Am. Chem. Soc.">
        <title>Opposed effects of enzymatic gliotoxin N- and S-methylations.</title>
        <authorList>
            <person name="Scharf D.H."/>
            <person name="Habel A."/>
            <person name="Heinekamp T."/>
            <person name="Brakhage A.A."/>
            <person name="Hertweck C."/>
        </authorList>
    </citation>
    <scope>FUNCTION</scope>
    <scope>CATALYTIC ACTIVITY</scope>
</reference>
<reference key="15">
    <citation type="journal article" date="2015" name="Eukaryot. Cell">
        <title>Interplay between gliotoxin resistance, secretion, and the methyl/methionine cycle in Aspergillus fumigatus.</title>
        <authorList>
            <person name="Owens R.A."/>
            <person name="O'Keeffe G."/>
            <person name="Smith E.B."/>
            <person name="Dolan S.K."/>
            <person name="Hammel S."/>
            <person name="Sheridan K.J."/>
            <person name="Fitzpatrick D.A."/>
            <person name="Keane T.M."/>
            <person name="Jones G.W."/>
            <person name="Doyle S."/>
        </authorList>
    </citation>
    <scope>FUNCTION</scope>
</reference>
<protein>
    <recommendedName>
        <fullName evidence="12">N-methyltransferase gliN</fullName>
        <ecNumber evidence="11">2.1.1.-</ecNumber>
    </recommendedName>
    <alternativeName>
        <fullName evidence="12">Gliotoxin biosynthesis protein N</fullName>
    </alternativeName>
</protein>
<feature type="chain" id="PRO_0000437729" description="N-methyltransferase gliN">
    <location>
        <begin position="1"/>
        <end position="282"/>
    </location>
</feature>
<accession>Q4WMJ1</accession>
<accession>Q5MBU5</accession>
<evidence type="ECO:0000269" key="1">
    <source>
    </source>
</evidence>
<evidence type="ECO:0000269" key="2">
    <source>
    </source>
</evidence>
<evidence type="ECO:0000269" key="3">
    <source>
    </source>
</evidence>
<evidence type="ECO:0000269" key="4">
    <source>
    </source>
</evidence>
<evidence type="ECO:0000269" key="5">
    <source>
    </source>
</evidence>
<evidence type="ECO:0000269" key="6">
    <source>
    </source>
</evidence>
<evidence type="ECO:0000269" key="7">
    <source>
    </source>
</evidence>
<evidence type="ECO:0000269" key="8">
    <source>
    </source>
</evidence>
<evidence type="ECO:0000269" key="9">
    <source>
    </source>
</evidence>
<evidence type="ECO:0000269" key="10">
    <source>
    </source>
</evidence>
<evidence type="ECO:0000269" key="11">
    <source>
    </source>
</evidence>
<evidence type="ECO:0000303" key="12">
    <source>
    </source>
</evidence>
<evidence type="ECO:0000305" key="13"/>
<name>GLIN_ASPFU</name>
<proteinExistence type="evidence at protein level"/>
<dbReference type="EC" id="2.1.1.-" evidence="11"/>
<dbReference type="EMBL" id="AY838877">
    <property type="protein sequence ID" value="AAW03301.1"/>
    <property type="status" value="ALT_SEQ"/>
    <property type="molecule type" value="Genomic_DNA"/>
</dbReference>
<dbReference type="EMBL" id="AAHF01000006">
    <property type="protein sequence ID" value="EAL88823.1"/>
    <property type="molecule type" value="Genomic_DNA"/>
</dbReference>
<dbReference type="RefSeq" id="XP_750861.1">
    <property type="nucleotide sequence ID" value="XM_745768.1"/>
</dbReference>
<dbReference type="SMR" id="Q4WMJ1"/>
<dbReference type="STRING" id="330879.Q4WMJ1"/>
<dbReference type="EnsemblFungi" id="EAL88823">
    <property type="protein sequence ID" value="EAL88823"/>
    <property type="gene ID" value="AFUA_6G09720"/>
</dbReference>
<dbReference type="GeneID" id="3508166"/>
<dbReference type="KEGG" id="afm:AFUA_6G09720"/>
<dbReference type="VEuPathDB" id="FungiDB:Afu6g09720"/>
<dbReference type="eggNOG" id="ENOG502SIG3">
    <property type="taxonomic scope" value="Eukaryota"/>
</dbReference>
<dbReference type="HOGENOM" id="CLU_010595_9_3_1"/>
<dbReference type="InParanoid" id="Q4WMJ1"/>
<dbReference type="OMA" id="ADGLWMR"/>
<dbReference type="OrthoDB" id="184880at2759"/>
<dbReference type="BioCyc" id="MetaCyc:MONOMER-18856"/>
<dbReference type="Proteomes" id="UP000002530">
    <property type="component" value="Chromosome 6"/>
</dbReference>
<dbReference type="GO" id="GO:0008168">
    <property type="term" value="F:methyltransferase activity"/>
    <property type="evidence" value="ECO:0000318"/>
    <property type="project" value="GO_Central"/>
</dbReference>
<dbReference type="GO" id="GO:2001310">
    <property type="term" value="P:gliotoxin biosynthetic process"/>
    <property type="evidence" value="ECO:0000304"/>
    <property type="project" value="UniProtKB"/>
</dbReference>
<dbReference type="GO" id="GO:0032259">
    <property type="term" value="P:methylation"/>
    <property type="evidence" value="ECO:0007669"/>
    <property type="project" value="UniProtKB-KW"/>
</dbReference>
<dbReference type="GO" id="GO:0043386">
    <property type="term" value="P:mycotoxin biosynthetic process"/>
    <property type="evidence" value="ECO:0000270"/>
    <property type="project" value="AspGD"/>
</dbReference>
<dbReference type="GO" id="GO:0052562">
    <property type="term" value="P:symbiont-mediated suppression of host immune response"/>
    <property type="evidence" value="ECO:0000304"/>
    <property type="project" value="UniProtKB"/>
</dbReference>
<dbReference type="FunFam" id="3.40.50.150:FF:000679">
    <property type="entry name" value="Methyltransferase GliN"/>
    <property type="match status" value="1"/>
</dbReference>
<dbReference type="Gene3D" id="3.40.50.150">
    <property type="entry name" value="Vaccinia Virus protein VP39"/>
    <property type="match status" value="1"/>
</dbReference>
<dbReference type="InterPro" id="IPR029063">
    <property type="entry name" value="SAM-dependent_MTases_sf"/>
</dbReference>
<dbReference type="SUPFAM" id="SSF53335">
    <property type="entry name" value="S-adenosyl-L-methionine-dependent methyltransferases"/>
    <property type="match status" value="1"/>
</dbReference>
<organism>
    <name type="scientific">Aspergillus fumigatus (strain ATCC MYA-4609 / CBS 101355 / FGSC A1100 / Af293)</name>
    <name type="common">Neosartorya fumigata</name>
    <dbReference type="NCBI Taxonomy" id="330879"/>
    <lineage>
        <taxon>Eukaryota</taxon>
        <taxon>Fungi</taxon>
        <taxon>Dikarya</taxon>
        <taxon>Ascomycota</taxon>
        <taxon>Pezizomycotina</taxon>
        <taxon>Eurotiomycetes</taxon>
        <taxon>Eurotiomycetidae</taxon>
        <taxon>Eurotiales</taxon>
        <taxon>Aspergillaceae</taxon>
        <taxon>Aspergillus</taxon>
        <taxon>Aspergillus subgen. Fumigati</taxon>
    </lineage>
</organism>